<dbReference type="EMBL" id="U18997">
    <property type="protein sequence ID" value="AAA58155.1"/>
    <property type="status" value="ALT_INIT"/>
    <property type="molecule type" value="Genomic_DNA"/>
</dbReference>
<dbReference type="EMBL" id="U00096">
    <property type="protein sequence ID" value="AAC76383.2"/>
    <property type="molecule type" value="Genomic_DNA"/>
</dbReference>
<dbReference type="EMBL" id="AP009048">
    <property type="protein sequence ID" value="BAE77932.1"/>
    <property type="molecule type" value="Genomic_DNA"/>
</dbReference>
<dbReference type="RefSeq" id="NP_417817.2">
    <property type="nucleotide sequence ID" value="NC_000913.3"/>
</dbReference>
<dbReference type="SMR" id="P45537"/>
<dbReference type="BioGRID" id="4262927">
    <property type="interactions" value="169"/>
</dbReference>
<dbReference type="FunCoup" id="P45537">
    <property type="interactions" value="8"/>
</dbReference>
<dbReference type="STRING" id="511145.b3358"/>
<dbReference type="TCDB" id="2.A.85.1.3">
    <property type="family name" value="the aromatic acid exporter (arae) family"/>
</dbReference>
<dbReference type="jPOST" id="P45537"/>
<dbReference type="PaxDb" id="511145-b3358"/>
<dbReference type="EnsemblBacteria" id="AAC76383">
    <property type="protein sequence ID" value="AAC76383"/>
    <property type="gene ID" value="b3358"/>
</dbReference>
<dbReference type="GeneID" id="947866"/>
<dbReference type="KEGG" id="ecj:JW5701"/>
<dbReference type="KEGG" id="eco:b3358"/>
<dbReference type="PATRIC" id="fig|511145.12.peg.3452"/>
<dbReference type="EchoBASE" id="EB2743"/>
<dbReference type="eggNOG" id="COG1289">
    <property type="taxonomic scope" value="Bacteria"/>
</dbReference>
<dbReference type="HOGENOM" id="CLU_025192_0_0_6"/>
<dbReference type="InParanoid" id="P45537"/>
<dbReference type="OMA" id="MRLWVTH"/>
<dbReference type="PhylomeDB" id="P45537"/>
<dbReference type="BioCyc" id="EcoCyc:G7721-MONOMER"/>
<dbReference type="PRO" id="PR:P45537"/>
<dbReference type="Proteomes" id="UP000000625">
    <property type="component" value="Chromosome"/>
</dbReference>
<dbReference type="GO" id="GO:0005886">
    <property type="term" value="C:plasma membrane"/>
    <property type="evidence" value="ECO:0000314"/>
    <property type="project" value="EcoCyc"/>
</dbReference>
<dbReference type="InterPro" id="IPR010020">
    <property type="entry name" value="Integral_membrane_YCCS_YHJK"/>
</dbReference>
<dbReference type="InterPro" id="IPR049453">
    <property type="entry name" value="Memb_transporter_dom"/>
</dbReference>
<dbReference type="InterPro" id="IPR032692">
    <property type="entry name" value="YccS_N"/>
</dbReference>
<dbReference type="NCBIfam" id="TIGR01667">
    <property type="entry name" value="YCCS_YHFK"/>
    <property type="match status" value="1"/>
</dbReference>
<dbReference type="PANTHER" id="PTHR30509:SF23">
    <property type="entry name" value="INNER MEMBRANE PROTEIN"/>
    <property type="match status" value="1"/>
</dbReference>
<dbReference type="PANTHER" id="PTHR30509">
    <property type="entry name" value="P-HYDROXYBENZOIC ACID EFFLUX PUMP SUBUNIT-RELATED"/>
    <property type="match status" value="1"/>
</dbReference>
<dbReference type="Pfam" id="PF12805">
    <property type="entry name" value="FUSC-like"/>
    <property type="match status" value="1"/>
</dbReference>
<dbReference type="Pfam" id="PF13515">
    <property type="entry name" value="FUSC_2"/>
    <property type="match status" value="1"/>
</dbReference>
<name>YHFK_ECOLI</name>
<comment type="subcellular location">
    <subcellularLocation>
        <location evidence="2">Cell membrane</location>
        <topology evidence="2">Multi-pass membrane protein</topology>
    </subcellularLocation>
</comment>
<comment type="similarity">
    <text evidence="2">Belongs to the YccS/YhfK family.</text>
</comment>
<comment type="sequence caution" evidence="2">
    <conflict type="erroneous initiation">
        <sequence resource="EMBL-CDS" id="AAA58155"/>
    </conflict>
    <text>Truncated N-terminus.</text>
</comment>
<keyword id="KW-1003">Cell membrane</keyword>
<keyword id="KW-0472">Membrane</keyword>
<keyword id="KW-1185">Reference proteome</keyword>
<keyword id="KW-0812">Transmembrane</keyword>
<keyword id="KW-1133">Transmembrane helix</keyword>
<proteinExistence type="inferred from homology"/>
<sequence length="700" mass="79972">MFPPMWRRLIYHPDINYALRQTLVLCLPVAVGLMLGELRFGLLFSLVPACCNIAGLDTPHKRFFKRLIIGASLFATCSLLTQLLLAKDVPLPFLLTGLTLVLGVTAELGPLHAKLLPASLLAAIFTLSLAGYMPVWEPLLIYALGTLWYGLFNWFWFWIWREQPLRESLSLLYRELADYCEAKYSLLTQHTDPEKALPPLLVRQQKAVDLITQCYQQMHMLSAQNNTDYKRMLRIFQEALDLQEHISVSLHQPEEVQKLVERSHAEEVIRWNAQTVAARLRVLADDILYHRLPTRFTMEKQIGALEKIARQHPDNPVGQFCYWHFSRIARVLRTQKPLYARDLLADKQRRMPLLPALKSYLSLKSPALRNAGRLSVMLSVASLMGTALHLPKSYWILMTVLLVTQNGYGATRLRIVNRSVGTVVGLIIAGVALHFKIPEGYTLTLMLITTLASYLILRKNYGWATVGFTITAVYTLQLLWLNGEQYILPRLIDTIIGCLIAFGGTVWLWPQWQSGLLRKNAHDALEAYQEAIRLILSEDPQPTPLAWQRMRVNQAHNTLYNSLNQAMQEPAFNSHYLADMKLWVTHSQFIVEHINAMTTLAREHRALPPELAQEYLQSCEIAIQRCQQRLEYDEPGSSGDANIMDAPEMQPHEGAAGTLEQHLQRVIGHLNTMHTISSMAWRQRPHHGIWLSRKLRDSKA</sequence>
<gene>
    <name type="primary">yhfK</name>
    <name type="ordered locus">b3358</name>
    <name type="ordered locus">JW5701</name>
</gene>
<accession>P45537</accession>
<accession>Q2M724</accession>
<reference key="1">
    <citation type="journal article" date="1997" name="Science">
        <title>The complete genome sequence of Escherichia coli K-12.</title>
        <authorList>
            <person name="Blattner F.R."/>
            <person name="Plunkett G. III"/>
            <person name="Bloch C.A."/>
            <person name="Perna N.T."/>
            <person name="Burland V."/>
            <person name="Riley M."/>
            <person name="Collado-Vides J."/>
            <person name="Glasner J.D."/>
            <person name="Rode C.K."/>
            <person name="Mayhew G.F."/>
            <person name="Gregor J."/>
            <person name="Davis N.W."/>
            <person name="Kirkpatrick H.A."/>
            <person name="Goeden M.A."/>
            <person name="Rose D.J."/>
            <person name="Mau B."/>
            <person name="Shao Y."/>
        </authorList>
    </citation>
    <scope>NUCLEOTIDE SEQUENCE [LARGE SCALE GENOMIC DNA]</scope>
    <source>
        <strain>K12 / MG1655 / ATCC 47076</strain>
    </source>
</reference>
<reference key="2">
    <citation type="journal article" date="2006" name="Mol. Syst. Biol.">
        <title>Highly accurate genome sequences of Escherichia coli K-12 strains MG1655 and W3110.</title>
        <authorList>
            <person name="Hayashi K."/>
            <person name="Morooka N."/>
            <person name="Yamamoto Y."/>
            <person name="Fujita K."/>
            <person name="Isono K."/>
            <person name="Choi S."/>
            <person name="Ohtsubo E."/>
            <person name="Baba T."/>
            <person name="Wanner B.L."/>
            <person name="Mori H."/>
            <person name="Horiuchi T."/>
        </authorList>
    </citation>
    <scope>NUCLEOTIDE SEQUENCE [LARGE SCALE GENOMIC DNA]</scope>
    <source>
        <strain>K12 / W3110 / ATCC 27325 / DSM 5911</strain>
    </source>
</reference>
<organism>
    <name type="scientific">Escherichia coli (strain K12)</name>
    <dbReference type="NCBI Taxonomy" id="83333"/>
    <lineage>
        <taxon>Bacteria</taxon>
        <taxon>Pseudomonadati</taxon>
        <taxon>Pseudomonadota</taxon>
        <taxon>Gammaproteobacteria</taxon>
        <taxon>Enterobacterales</taxon>
        <taxon>Enterobacteriaceae</taxon>
        <taxon>Escherichia</taxon>
    </lineage>
</organism>
<feature type="chain" id="PRO_0000169523" description="Uncharacterized protein YhfK">
    <location>
        <begin position="1"/>
        <end position="700"/>
    </location>
</feature>
<feature type="transmembrane region" description="Helical" evidence="1">
    <location>
        <begin position="24"/>
        <end position="44"/>
    </location>
</feature>
<feature type="transmembrane region" description="Helical" evidence="1">
    <location>
        <begin position="67"/>
        <end position="87"/>
    </location>
</feature>
<feature type="transmembrane region" description="Helical" evidence="1">
    <location>
        <begin position="89"/>
        <end position="109"/>
    </location>
</feature>
<feature type="transmembrane region" description="Helical" evidence="1">
    <location>
        <begin position="115"/>
        <end position="135"/>
    </location>
</feature>
<feature type="transmembrane region" description="Helical" evidence="1">
    <location>
        <begin position="139"/>
        <end position="159"/>
    </location>
</feature>
<feature type="transmembrane region" description="Helical" evidence="1">
    <location>
        <begin position="383"/>
        <end position="403"/>
    </location>
</feature>
<feature type="transmembrane region" description="Helical" evidence="1">
    <location>
        <begin position="420"/>
        <end position="440"/>
    </location>
</feature>
<feature type="transmembrane region" description="Helical" evidence="1">
    <location>
        <begin position="461"/>
        <end position="481"/>
    </location>
</feature>
<feature type="transmembrane region" description="Helical" evidence="1">
    <location>
        <begin position="491"/>
        <end position="511"/>
    </location>
</feature>
<evidence type="ECO:0000255" key="1"/>
<evidence type="ECO:0000305" key="2"/>
<protein>
    <recommendedName>
        <fullName>Uncharacterized protein YhfK</fullName>
    </recommendedName>
</protein>